<keyword id="KW-1185">Reference proteome</keyword>
<keyword id="KW-0687">Ribonucleoprotein</keyword>
<keyword id="KW-0689">Ribosomal protein</keyword>
<protein>
    <recommendedName>
        <fullName evidence="1">Large ribosomal subunit protein eL27</fullName>
    </recommendedName>
    <alternativeName>
        <fullName>60S ribosomal protein L27</fullName>
    </alternativeName>
</protein>
<proteinExistence type="inferred from homology"/>
<evidence type="ECO:0000305" key="1"/>
<dbReference type="EMBL" id="AAFI02000006">
    <property type="protein sequence ID" value="EAL71779.1"/>
    <property type="molecule type" value="Genomic_DNA"/>
</dbReference>
<dbReference type="RefSeq" id="XP_645666.1">
    <property type="nucleotide sequence ID" value="XM_640574.1"/>
</dbReference>
<dbReference type="SMR" id="Q55BE6"/>
<dbReference type="FunCoup" id="Q55BE6">
    <property type="interactions" value="555"/>
</dbReference>
<dbReference type="STRING" id="44689.Q55BE6"/>
<dbReference type="PaxDb" id="44689-DDB0230153"/>
<dbReference type="EnsemblProtists" id="EAL71779">
    <property type="protein sequence ID" value="EAL71779"/>
    <property type="gene ID" value="DDB_G0271298"/>
</dbReference>
<dbReference type="GeneID" id="8617858"/>
<dbReference type="KEGG" id="ddi:DDB_G0271298"/>
<dbReference type="dictyBase" id="DDB_G0271298">
    <property type="gene designation" value="rpl27"/>
</dbReference>
<dbReference type="VEuPathDB" id="AmoebaDB:DDB_G0271298"/>
<dbReference type="eggNOG" id="KOG3418">
    <property type="taxonomic scope" value="Eukaryota"/>
</dbReference>
<dbReference type="HOGENOM" id="CLU_067359_0_1_1"/>
<dbReference type="InParanoid" id="Q55BE6"/>
<dbReference type="OMA" id="NQWFFTK"/>
<dbReference type="PhylomeDB" id="Q55BE6"/>
<dbReference type="Reactome" id="R-DDI-156827">
    <property type="pathway name" value="L13a-mediated translational silencing of Ceruloplasmin expression"/>
</dbReference>
<dbReference type="Reactome" id="R-DDI-1799339">
    <property type="pathway name" value="SRP-dependent cotranslational protein targeting to membrane"/>
</dbReference>
<dbReference type="Reactome" id="R-DDI-72689">
    <property type="pathway name" value="Formation of a pool of free 40S subunits"/>
</dbReference>
<dbReference type="Reactome" id="R-DDI-72706">
    <property type="pathway name" value="GTP hydrolysis and joining of the 60S ribosomal subunit"/>
</dbReference>
<dbReference type="Reactome" id="R-DDI-975956">
    <property type="pathway name" value="Nonsense Mediated Decay (NMD) independent of the Exon Junction Complex (EJC)"/>
</dbReference>
<dbReference type="Reactome" id="R-DDI-975957">
    <property type="pathway name" value="Nonsense Mediated Decay (NMD) enhanced by the Exon Junction Complex (EJC)"/>
</dbReference>
<dbReference type="PRO" id="PR:Q55BE6"/>
<dbReference type="Proteomes" id="UP000002195">
    <property type="component" value="Chromosome 2"/>
</dbReference>
<dbReference type="GO" id="GO:0022625">
    <property type="term" value="C:cytosolic large ribosomal subunit"/>
    <property type="evidence" value="ECO:0000318"/>
    <property type="project" value="GO_Central"/>
</dbReference>
<dbReference type="GO" id="GO:0003735">
    <property type="term" value="F:structural constituent of ribosome"/>
    <property type="evidence" value="ECO:0000318"/>
    <property type="project" value="GO_Central"/>
</dbReference>
<dbReference type="GO" id="GO:0006412">
    <property type="term" value="P:translation"/>
    <property type="evidence" value="ECO:0007669"/>
    <property type="project" value="InterPro"/>
</dbReference>
<dbReference type="CDD" id="cd06090">
    <property type="entry name" value="KOW_RPL27"/>
    <property type="match status" value="1"/>
</dbReference>
<dbReference type="FunFam" id="2.30.30.770:FF:000002">
    <property type="entry name" value="60S ribosomal protein L27"/>
    <property type="match status" value="1"/>
</dbReference>
<dbReference type="Gene3D" id="2.30.30.770">
    <property type="match status" value="1"/>
</dbReference>
<dbReference type="InterPro" id="IPR005824">
    <property type="entry name" value="KOW"/>
</dbReference>
<dbReference type="InterPro" id="IPR001141">
    <property type="entry name" value="Ribosomal_eL27"/>
</dbReference>
<dbReference type="InterPro" id="IPR018262">
    <property type="entry name" value="Ribosomal_eL27_CS"/>
</dbReference>
<dbReference type="InterPro" id="IPR041991">
    <property type="entry name" value="Ribosomal_eL27_KOW"/>
</dbReference>
<dbReference type="InterPro" id="IPR038655">
    <property type="entry name" value="Ribosomal_eL27_sf"/>
</dbReference>
<dbReference type="InterPro" id="IPR008991">
    <property type="entry name" value="Translation_prot_SH3-like_sf"/>
</dbReference>
<dbReference type="PANTHER" id="PTHR10497">
    <property type="entry name" value="60S RIBOSOMAL PROTEIN L27"/>
    <property type="match status" value="1"/>
</dbReference>
<dbReference type="Pfam" id="PF01777">
    <property type="entry name" value="Ribosomal_L27e"/>
    <property type="match status" value="1"/>
</dbReference>
<dbReference type="SMART" id="SM00739">
    <property type="entry name" value="KOW"/>
    <property type="match status" value="1"/>
</dbReference>
<dbReference type="SUPFAM" id="SSF50104">
    <property type="entry name" value="Translation proteins SH3-like domain"/>
    <property type="match status" value="1"/>
</dbReference>
<dbReference type="PROSITE" id="PS01107">
    <property type="entry name" value="RIBOSOMAL_L27E"/>
    <property type="match status" value="1"/>
</dbReference>
<sequence>MSSKFIKPGRLVILLNGKYAGRKAVVIKTFDDATASKSRPYGHCLVAGIDKYPRSIVRSMSRKTILKRTAIRSFVKVVNYNHIMPTRYNFEGRDESAFTGLKNTVTVESSQVAKRAHTRLAVKKIFEAKHKAGKSKWFFSKLRF</sequence>
<gene>
    <name type="primary">rpl27</name>
    <name type="ORF">DDB_G0271298</name>
</gene>
<comment type="similarity">
    <text evidence="1">Belongs to the eukaryotic ribosomal protein eL27 family.</text>
</comment>
<organism>
    <name type="scientific">Dictyostelium discoideum</name>
    <name type="common">Social amoeba</name>
    <dbReference type="NCBI Taxonomy" id="44689"/>
    <lineage>
        <taxon>Eukaryota</taxon>
        <taxon>Amoebozoa</taxon>
        <taxon>Evosea</taxon>
        <taxon>Eumycetozoa</taxon>
        <taxon>Dictyostelia</taxon>
        <taxon>Dictyosteliales</taxon>
        <taxon>Dictyosteliaceae</taxon>
        <taxon>Dictyostelium</taxon>
    </lineage>
</organism>
<accession>Q55BE6</accession>
<name>RL27_DICDI</name>
<feature type="chain" id="PRO_0000323438" description="Large ribosomal subunit protein eL27">
    <location>
        <begin position="1"/>
        <end position="144"/>
    </location>
</feature>
<feature type="domain" description="KOW">
    <location>
        <begin position="6"/>
        <end position="43"/>
    </location>
</feature>
<reference key="1">
    <citation type="journal article" date="2002" name="Nature">
        <title>Sequence and analysis of chromosome 2 of Dictyostelium discoideum.</title>
        <authorList>
            <person name="Gloeckner G."/>
            <person name="Eichinger L."/>
            <person name="Szafranski K."/>
            <person name="Pachebat J.A."/>
            <person name="Bankier A.T."/>
            <person name="Dear P.H."/>
            <person name="Lehmann R."/>
            <person name="Baumgart C."/>
            <person name="Parra G."/>
            <person name="Abril J.F."/>
            <person name="Guigo R."/>
            <person name="Kumpf K."/>
            <person name="Tunggal B."/>
            <person name="Cox E.C."/>
            <person name="Quail M.A."/>
            <person name="Platzer M."/>
            <person name="Rosenthal A."/>
            <person name="Noegel A.A."/>
        </authorList>
    </citation>
    <scope>NUCLEOTIDE SEQUENCE [LARGE SCALE GENOMIC DNA]</scope>
    <source>
        <strain>AX4</strain>
    </source>
</reference>
<reference key="2">
    <citation type="journal article" date="2005" name="Nature">
        <title>The genome of the social amoeba Dictyostelium discoideum.</title>
        <authorList>
            <person name="Eichinger L."/>
            <person name="Pachebat J.A."/>
            <person name="Gloeckner G."/>
            <person name="Rajandream M.A."/>
            <person name="Sucgang R."/>
            <person name="Berriman M."/>
            <person name="Song J."/>
            <person name="Olsen R."/>
            <person name="Szafranski K."/>
            <person name="Xu Q."/>
            <person name="Tunggal B."/>
            <person name="Kummerfeld S."/>
            <person name="Madera M."/>
            <person name="Konfortov B.A."/>
            <person name="Rivero F."/>
            <person name="Bankier A.T."/>
            <person name="Lehmann R."/>
            <person name="Hamlin N."/>
            <person name="Davies R."/>
            <person name="Gaudet P."/>
            <person name="Fey P."/>
            <person name="Pilcher K."/>
            <person name="Chen G."/>
            <person name="Saunders D."/>
            <person name="Sodergren E.J."/>
            <person name="Davis P."/>
            <person name="Kerhornou A."/>
            <person name="Nie X."/>
            <person name="Hall N."/>
            <person name="Anjard C."/>
            <person name="Hemphill L."/>
            <person name="Bason N."/>
            <person name="Farbrother P."/>
            <person name="Desany B."/>
            <person name="Just E."/>
            <person name="Morio T."/>
            <person name="Rost R."/>
            <person name="Churcher C.M."/>
            <person name="Cooper J."/>
            <person name="Haydock S."/>
            <person name="van Driessche N."/>
            <person name="Cronin A."/>
            <person name="Goodhead I."/>
            <person name="Muzny D.M."/>
            <person name="Mourier T."/>
            <person name="Pain A."/>
            <person name="Lu M."/>
            <person name="Harper D."/>
            <person name="Lindsay R."/>
            <person name="Hauser H."/>
            <person name="James K.D."/>
            <person name="Quiles M."/>
            <person name="Madan Babu M."/>
            <person name="Saito T."/>
            <person name="Buchrieser C."/>
            <person name="Wardroper A."/>
            <person name="Felder M."/>
            <person name="Thangavelu M."/>
            <person name="Johnson D."/>
            <person name="Knights A."/>
            <person name="Loulseged H."/>
            <person name="Mungall K.L."/>
            <person name="Oliver K."/>
            <person name="Price C."/>
            <person name="Quail M.A."/>
            <person name="Urushihara H."/>
            <person name="Hernandez J."/>
            <person name="Rabbinowitsch E."/>
            <person name="Steffen D."/>
            <person name="Sanders M."/>
            <person name="Ma J."/>
            <person name="Kohara Y."/>
            <person name="Sharp S."/>
            <person name="Simmonds M.N."/>
            <person name="Spiegler S."/>
            <person name="Tivey A."/>
            <person name="Sugano S."/>
            <person name="White B."/>
            <person name="Walker D."/>
            <person name="Woodward J.R."/>
            <person name="Winckler T."/>
            <person name="Tanaka Y."/>
            <person name="Shaulsky G."/>
            <person name="Schleicher M."/>
            <person name="Weinstock G.M."/>
            <person name="Rosenthal A."/>
            <person name="Cox E.C."/>
            <person name="Chisholm R.L."/>
            <person name="Gibbs R.A."/>
            <person name="Loomis W.F."/>
            <person name="Platzer M."/>
            <person name="Kay R.R."/>
            <person name="Williams J.G."/>
            <person name="Dear P.H."/>
            <person name="Noegel A.A."/>
            <person name="Barrell B.G."/>
            <person name="Kuspa A."/>
        </authorList>
    </citation>
    <scope>NUCLEOTIDE SEQUENCE [LARGE SCALE GENOMIC DNA]</scope>
    <source>
        <strain>AX4</strain>
    </source>
</reference>